<protein>
    <recommendedName>
        <fullName>Glutaredoxin 4</fullName>
        <shortName>Grx4</shortName>
    </recommendedName>
    <alternativeName>
        <fullName>Monothiol glutaredoxin</fullName>
    </alternativeName>
</protein>
<reference key="1">
    <citation type="journal article" date="1998" name="Gene">
        <title>The sodA gene of Haemophilus ducreyi encodes a hydrogen peroxide-inhibitable superoxide dismutase.</title>
        <authorList>
            <person name="San Mateo L.R."/>
            <person name="Toffer K.L."/>
            <person name="Kawula T.H."/>
        </authorList>
    </citation>
    <scope>NUCLEOTIDE SEQUENCE [GENOMIC DNA]</scope>
    <source>
        <strain>35000HP / ATCC 700724</strain>
    </source>
</reference>
<reference key="2">
    <citation type="submission" date="2003-06" db="EMBL/GenBank/DDBJ databases">
        <title>The complete genome sequence of Haemophilus ducreyi.</title>
        <authorList>
            <person name="Munson R.S. Jr."/>
            <person name="Ray W.C."/>
            <person name="Mahairas G."/>
            <person name="Sabo P."/>
            <person name="Mungur R."/>
            <person name="Johnson L."/>
            <person name="Nguyen D."/>
            <person name="Wang J."/>
            <person name="Forst C."/>
            <person name="Hood L."/>
        </authorList>
    </citation>
    <scope>NUCLEOTIDE SEQUENCE [LARGE SCALE GENOMIC DNA]</scope>
    <source>
        <strain>35000HP / ATCC 700724</strain>
    </source>
</reference>
<keyword id="KW-0001">2Fe-2S</keyword>
<keyword id="KW-0963">Cytoplasm</keyword>
<keyword id="KW-0408">Iron</keyword>
<keyword id="KW-0411">Iron-sulfur</keyword>
<keyword id="KW-0479">Metal-binding</keyword>
<keyword id="KW-0676">Redox-active center</keyword>
<keyword id="KW-1185">Reference proteome</keyword>
<comment type="function">
    <text evidence="1">Monothiol glutaredoxin involved in the biogenesis of iron-sulfur clusters.</text>
</comment>
<comment type="subunit">
    <text evidence="1">Homodimer.</text>
</comment>
<comment type="subcellular location">
    <subcellularLocation>
        <location evidence="1">Cytoplasm</location>
    </subcellularLocation>
</comment>
<comment type="similarity">
    <text evidence="3">Belongs to the glutaredoxin family. Monothiol subfamily.</text>
</comment>
<proteinExistence type="inferred from homology"/>
<name>GLRX4_HAEDU</name>
<feature type="chain" id="PRO_0000293132" description="Glutaredoxin 4">
    <location>
        <begin position="1"/>
        <end position="107"/>
    </location>
</feature>
<feature type="domain" description="Glutaredoxin" evidence="2">
    <location>
        <begin position="4"/>
        <end position="106"/>
    </location>
</feature>
<feature type="binding site" evidence="1">
    <location>
        <position position="21"/>
    </location>
    <ligand>
        <name>glutathione</name>
        <dbReference type="ChEBI" id="CHEBI:57925"/>
    </ligand>
</feature>
<feature type="binding site" evidence="1">
    <location>
        <position position="29"/>
    </location>
    <ligand>
        <name>[2Fe-2S] cluster</name>
        <dbReference type="ChEBI" id="CHEBI:190135"/>
        <note>ligand shared between dimeric partners</note>
    </ligand>
</feature>
<feature type="binding site" evidence="1">
    <location>
        <position position="58"/>
    </location>
    <ligand>
        <name>glutathione</name>
        <dbReference type="ChEBI" id="CHEBI:57925"/>
    </ligand>
</feature>
<feature type="binding site" evidence="1">
    <location>
        <position position="70"/>
    </location>
    <ligand>
        <name>glutathione</name>
        <dbReference type="ChEBI" id="CHEBI:57925"/>
    </ligand>
</feature>
<feature type="binding site" evidence="1">
    <location>
        <begin position="83"/>
        <end position="84"/>
    </location>
    <ligand>
        <name>glutathione</name>
        <dbReference type="ChEBI" id="CHEBI:57925"/>
    </ligand>
</feature>
<accession>O30824</accession>
<accession>Q7BY79</accession>
<organism>
    <name type="scientific">Haemophilus ducreyi (strain 35000HP / ATCC 700724)</name>
    <dbReference type="NCBI Taxonomy" id="233412"/>
    <lineage>
        <taxon>Bacteria</taxon>
        <taxon>Pseudomonadati</taxon>
        <taxon>Pseudomonadota</taxon>
        <taxon>Gammaproteobacteria</taxon>
        <taxon>Pasteurellales</taxon>
        <taxon>Pasteurellaceae</taxon>
        <taxon>Haemophilus</taxon>
    </lineage>
</organism>
<evidence type="ECO:0000250" key="1"/>
<evidence type="ECO:0000255" key="2">
    <source>
        <dbReference type="PROSITE-ProRule" id="PRU00686"/>
    </source>
</evidence>
<evidence type="ECO:0000305" key="3"/>
<sequence>METIDKIKQQINENPILLYMKGSPKFPSCGFSARAVEAIIQCQVPFGYVDILTNPDIRSELPKFANWPTFPQLWVEGELIGGCDIILEMFQKGELHTLLKETATKHG</sequence>
<dbReference type="EMBL" id="AF017750">
    <property type="protein sequence ID" value="AAC46217.1"/>
    <property type="molecule type" value="Genomic_DNA"/>
</dbReference>
<dbReference type="EMBL" id="AE017143">
    <property type="protein sequence ID" value="AAP95301.1"/>
    <property type="molecule type" value="Genomic_DNA"/>
</dbReference>
<dbReference type="RefSeq" id="WP_010944354.1">
    <property type="nucleotide sequence ID" value="NC_002940.2"/>
</dbReference>
<dbReference type="SMR" id="O30824"/>
<dbReference type="STRING" id="233412.HD_0324"/>
<dbReference type="KEGG" id="hdu:HD_0324"/>
<dbReference type="eggNOG" id="COG0278">
    <property type="taxonomic scope" value="Bacteria"/>
</dbReference>
<dbReference type="HOGENOM" id="CLU_026126_2_1_6"/>
<dbReference type="OrthoDB" id="9804115at2"/>
<dbReference type="Proteomes" id="UP000001022">
    <property type="component" value="Chromosome"/>
</dbReference>
<dbReference type="GO" id="GO:0005737">
    <property type="term" value="C:cytoplasm"/>
    <property type="evidence" value="ECO:0007669"/>
    <property type="project" value="UniProtKB-SubCell"/>
</dbReference>
<dbReference type="GO" id="GO:0051537">
    <property type="term" value="F:2 iron, 2 sulfur cluster binding"/>
    <property type="evidence" value="ECO:0007669"/>
    <property type="project" value="UniProtKB-KW"/>
</dbReference>
<dbReference type="GO" id="GO:0015036">
    <property type="term" value="F:disulfide oxidoreductase activity"/>
    <property type="evidence" value="ECO:0007669"/>
    <property type="project" value="InterPro"/>
</dbReference>
<dbReference type="GO" id="GO:0046872">
    <property type="term" value="F:metal ion binding"/>
    <property type="evidence" value="ECO:0007669"/>
    <property type="project" value="UniProtKB-KW"/>
</dbReference>
<dbReference type="CDD" id="cd03028">
    <property type="entry name" value="GRX_PICOT_like"/>
    <property type="match status" value="1"/>
</dbReference>
<dbReference type="FunFam" id="3.40.30.10:FF:000006">
    <property type="entry name" value="Glutaredoxin"/>
    <property type="match status" value="1"/>
</dbReference>
<dbReference type="Gene3D" id="3.40.30.10">
    <property type="entry name" value="Glutaredoxin"/>
    <property type="match status" value="1"/>
</dbReference>
<dbReference type="InterPro" id="IPR002109">
    <property type="entry name" value="Glutaredoxin"/>
</dbReference>
<dbReference type="InterPro" id="IPR033658">
    <property type="entry name" value="GRX_PICOT-like"/>
</dbReference>
<dbReference type="InterPro" id="IPR014434">
    <property type="entry name" value="Monothiol_GRX"/>
</dbReference>
<dbReference type="InterPro" id="IPR004480">
    <property type="entry name" value="Monothiol_GRX-rel"/>
</dbReference>
<dbReference type="InterPro" id="IPR036249">
    <property type="entry name" value="Thioredoxin-like_sf"/>
</dbReference>
<dbReference type="NCBIfam" id="TIGR00365">
    <property type="entry name" value="Grx4 family monothiol glutaredoxin"/>
    <property type="match status" value="1"/>
</dbReference>
<dbReference type="PANTHER" id="PTHR10293">
    <property type="entry name" value="GLUTAREDOXIN FAMILY MEMBER"/>
    <property type="match status" value="1"/>
</dbReference>
<dbReference type="PANTHER" id="PTHR10293:SF72">
    <property type="entry name" value="MONOTHIOL GLUTAREDOXIN-S14, CHLOROPLASTIC"/>
    <property type="match status" value="1"/>
</dbReference>
<dbReference type="Pfam" id="PF00462">
    <property type="entry name" value="Glutaredoxin"/>
    <property type="match status" value="1"/>
</dbReference>
<dbReference type="PIRSF" id="PIRSF005894">
    <property type="entry name" value="Monothiol_GRX"/>
    <property type="match status" value="1"/>
</dbReference>
<dbReference type="SUPFAM" id="SSF52833">
    <property type="entry name" value="Thioredoxin-like"/>
    <property type="match status" value="1"/>
</dbReference>
<dbReference type="PROSITE" id="PS51354">
    <property type="entry name" value="GLUTAREDOXIN_2"/>
    <property type="match status" value="1"/>
</dbReference>
<gene>
    <name type="primary">grxD</name>
    <name type="ordered locus">HD_0324</name>
    <name type="ORF">hypo107</name>
</gene>